<sequence>MNLVLMGLPGAGKGTQGERIVEDYGIPHISTGDMFRAAMKEETPLGLEAKSYIDKGELVPDEVTIGIVKERLGKDDCERGFLLDGFPRTVAQAEALEEILEEYGKPIDYVINIEVDKDVLMERLTGRRICSVCGTTYHLVFNPPKTPGICDKDGGELYQRADDNEETVSKRLEVNMKQTQPLLDFYSEKGYLANVNGQQDIQDVYADVKDLLGGLKK</sequence>
<feature type="chain" id="PRO_0000158730" description="Adenylate kinase">
    <location>
        <begin position="1"/>
        <end position="217"/>
    </location>
</feature>
<feature type="region of interest" description="NMP" evidence="1 2 3">
    <location>
        <begin position="30"/>
        <end position="59"/>
    </location>
</feature>
<feature type="region of interest" description="LID" evidence="1 2 3">
    <location>
        <begin position="126"/>
        <end position="163"/>
    </location>
</feature>
<feature type="binding site" evidence="1 2 3">
    <location>
        <begin position="10"/>
        <end position="15"/>
    </location>
    <ligand>
        <name>ATP</name>
        <dbReference type="ChEBI" id="CHEBI:30616"/>
    </ligand>
</feature>
<feature type="binding site" evidence="1 2 3">
    <location>
        <position position="31"/>
    </location>
    <ligand>
        <name>AMP</name>
        <dbReference type="ChEBI" id="CHEBI:456215"/>
    </ligand>
</feature>
<feature type="binding site" evidence="1 2 3">
    <location>
        <position position="36"/>
    </location>
    <ligand>
        <name>AMP</name>
        <dbReference type="ChEBI" id="CHEBI:456215"/>
    </ligand>
</feature>
<feature type="binding site" evidence="1 2 3">
    <location>
        <begin position="57"/>
        <end position="59"/>
    </location>
    <ligand>
        <name>AMP</name>
        <dbReference type="ChEBI" id="CHEBI:456215"/>
    </ligand>
</feature>
<feature type="binding site" evidence="1 2 3">
    <location>
        <begin position="85"/>
        <end position="88"/>
    </location>
    <ligand>
        <name>AMP</name>
        <dbReference type="ChEBI" id="CHEBI:456215"/>
    </ligand>
</feature>
<feature type="binding site" evidence="1 2 3">
    <location>
        <position position="92"/>
    </location>
    <ligand>
        <name>AMP</name>
        <dbReference type="ChEBI" id="CHEBI:456215"/>
    </ligand>
</feature>
<feature type="binding site" evidence="1 2 3">
    <location>
        <position position="127"/>
    </location>
    <ligand>
        <name>ATP</name>
        <dbReference type="ChEBI" id="CHEBI:30616"/>
    </ligand>
</feature>
<feature type="binding site" evidence="1 2 3">
    <location>
        <position position="130"/>
    </location>
    <ligand>
        <name>Zn(2+)</name>
        <dbReference type="ChEBI" id="CHEBI:29105"/>
        <note>structural</note>
    </ligand>
</feature>
<feature type="binding site" evidence="1 2 3">
    <location>
        <position position="133"/>
    </location>
    <ligand>
        <name>Zn(2+)</name>
        <dbReference type="ChEBI" id="CHEBI:29105"/>
        <note>structural</note>
    </ligand>
</feature>
<feature type="binding site" evidence="1 2 3">
    <location>
        <begin position="136"/>
        <end position="137"/>
    </location>
    <ligand>
        <name>ATP</name>
        <dbReference type="ChEBI" id="CHEBI:30616"/>
    </ligand>
</feature>
<feature type="binding site" evidence="1 2 3">
    <location>
        <position position="150"/>
    </location>
    <ligand>
        <name>Zn(2+)</name>
        <dbReference type="ChEBI" id="CHEBI:29105"/>
        <note>structural</note>
    </ligand>
</feature>
<feature type="binding site" evidence="1 2 3">
    <location>
        <position position="153"/>
    </location>
    <ligand>
        <name>Zn(2+)</name>
        <dbReference type="ChEBI" id="CHEBI:29105"/>
        <note>structural</note>
    </ligand>
</feature>
<feature type="binding site" evidence="1 2 3">
    <location>
        <position position="160"/>
    </location>
    <ligand>
        <name>AMP</name>
        <dbReference type="ChEBI" id="CHEBI:456215"/>
    </ligand>
</feature>
<feature type="binding site" evidence="1 2 3">
    <location>
        <position position="171"/>
    </location>
    <ligand>
        <name>AMP</name>
        <dbReference type="ChEBI" id="CHEBI:456215"/>
    </ligand>
</feature>
<feature type="binding site" evidence="1 2 3">
    <location>
        <position position="199"/>
    </location>
    <ligand>
        <name>ATP</name>
        <dbReference type="ChEBI" id="CHEBI:30616"/>
    </ligand>
</feature>
<feature type="strand" evidence="9">
    <location>
        <begin position="2"/>
        <end position="6"/>
    </location>
</feature>
<feature type="helix" evidence="9">
    <location>
        <begin position="13"/>
        <end position="24"/>
    </location>
</feature>
<feature type="strand" evidence="9">
    <location>
        <begin position="28"/>
        <end position="30"/>
    </location>
</feature>
<feature type="helix" evidence="9">
    <location>
        <begin position="31"/>
        <end position="41"/>
    </location>
</feature>
<feature type="helix" evidence="9">
    <location>
        <begin position="44"/>
        <end position="53"/>
    </location>
</feature>
<feature type="turn" evidence="9">
    <location>
        <begin position="54"/>
        <end position="56"/>
    </location>
</feature>
<feature type="helix" evidence="9">
    <location>
        <begin position="61"/>
        <end position="72"/>
    </location>
</feature>
<feature type="helix" evidence="9">
    <location>
        <begin position="75"/>
        <end position="77"/>
    </location>
</feature>
<feature type="strand" evidence="9">
    <location>
        <begin position="81"/>
        <end position="85"/>
    </location>
</feature>
<feature type="helix" evidence="9">
    <location>
        <begin position="90"/>
        <end position="102"/>
    </location>
</feature>
<feature type="strand" evidence="9">
    <location>
        <begin position="109"/>
        <end position="114"/>
    </location>
</feature>
<feature type="helix" evidence="9">
    <location>
        <begin position="117"/>
        <end position="124"/>
    </location>
</feature>
<feature type="strand" evidence="9">
    <location>
        <begin position="127"/>
        <end position="130"/>
    </location>
</feature>
<feature type="turn" evidence="9">
    <location>
        <begin position="131"/>
        <end position="133"/>
    </location>
</feature>
<feature type="strand" evidence="9">
    <location>
        <begin position="136"/>
        <end position="138"/>
    </location>
</feature>
<feature type="turn" evidence="9">
    <location>
        <begin position="139"/>
        <end position="141"/>
    </location>
</feature>
<feature type="turn" evidence="9">
    <location>
        <begin position="151"/>
        <end position="153"/>
    </location>
</feature>
<feature type="strand" evidence="9">
    <location>
        <begin position="156"/>
        <end position="158"/>
    </location>
</feature>
<feature type="helix" evidence="8">
    <location>
        <begin position="161"/>
        <end position="163"/>
    </location>
</feature>
<feature type="helix" evidence="9">
    <location>
        <begin position="165"/>
        <end position="188"/>
    </location>
</feature>
<feature type="strand" evidence="9">
    <location>
        <begin position="192"/>
        <end position="196"/>
    </location>
</feature>
<feature type="helix" evidence="9">
    <location>
        <begin position="201"/>
        <end position="212"/>
    </location>
</feature>
<feature type="helix" evidence="7">
    <location>
        <begin position="213"/>
        <end position="215"/>
    </location>
</feature>
<keyword id="KW-0002">3D-structure</keyword>
<keyword id="KW-0067">ATP-binding</keyword>
<keyword id="KW-0963">Cytoplasm</keyword>
<keyword id="KW-0903">Direct protein sequencing</keyword>
<keyword id="KW-0418">Kinase</keyword>
<keyword id="KW-0479">Metal-binding</keyword>
<keyword id="KW-0545">Nucleotide biosynthesis</keyword>
<keyword id="KW-0547">Nucleotide-binding</keyword>
<keyword id="KW-1185">Reference proteome</keyword>
<keyword id="KW-0808">Transferase</keyword>
<keyword id="KW-0862">Zinc</keyword>
<reference key="1">
    <citation type="journal article" date="1990" name="J. Biochem.">
        <title>Cloning and characterization of a Bacillus subtilis gene homologous to E. coli secY.</title>
        <authorList>
            <person name="Nakamura K."/>
            <person name="Nakamura A."/>
            <person name="Takamatsu H."/>
            <person name="Yoshikawa H."/>
            <person name="Yamane K."/>
        </authorList>
    </citation>
    <scope>NUCLEOTIDE SEQUENCE [GENOMIC DNA]</scope>
</reference>
<reference key="2">
    <citation type="journal article" date="1996" name="Gene">
        <title>Genetic and transcriptional organization of the Bacillus subtilis spc-alpha region.</title>
        <authorList>
            <person name="Suh J.-W."/>
            <person name="Boylan S.A."/>
            <person name="Oh S.H."/>
            <person name="Price C.W."/>
        </authorList>
    </citation>
    <scope>NUCLEOTIDE SEQUENCE [GENOMIC DNA]</scope>
    <source>
        <strain>168 / Marburg / ATCC 6051 / DSM 10 / JCM 1465 / NBRC 13719 / NCIMB 3610 / NRRL NRS-744 / VKM B-501</strain>
    </source>
</reference>
<reference key="3">
    <citation type="journal article" date="1997" name="Nature">
        <title>The complete genome sequence of the Gram-positive bacterium Bacillus subtilis.</title>
        <authorList>
            <person name="Kunst F."/>
            <person name="Ogasawara N."/>
            <person name="Moszer I."/>
            <person name="Albertini A.M."/>
            <person name="Alloni G."/>
            <person name="Azevedo V."/>
            <person name="Bertero M.G."/>
            <person name="Bessieres P."/>
            <person name="Bolotin A."/>
            <person name="Borchert S."/>
            <person name="Borriss R."/>
            <person name="Boursier L."/>
            <person name="Brans A."/>
            <person name="Braun M."/>
            <person name="Brignell S.C."/>
            <person name="Bron S."/>
            <person name="Brouillet S."/>
            <person name="Bruschi C.V."/>
            <person name="Caldwell B."/>
            <person name="Capuano V."/>
            <person name="Carter N.M."/>
            <person name="Choi S.-K."/>
            <person name="Codani J.-J."/>
            <person name="Connerton I.F."/>
            <person name="Cummings N.J."/>
            <person name="Daniel R.A."/>
            <person name="Denizot F."/>
            <person name="Devine K.M."/>
            <person name="Duesterhoeft A."/>
            <person name="Ehrlich S.D."/>
            <person name="Emmerson P.T."/>
            <person name="Entian K.-D."/>
            <person name="Errington J."/>
            <person name="Fabret C."/>
            <person name="Ferrari E."/>
            <person name="Foulger D."/>
            <person name="Fritz C."/>
            <person name="Fujita M."/>
            <person name="Fujita Y."/>
            <person name="Fuma S."/>
            <person name="Galizzi A."/>
            <person name="Galleron N."/>
            <person name="Ghim S.-Y."/>
            <person name="Glaser P."/>
            <person name="Goffeau A."/>
            <person name="Golightly E.J."/>
            <person name="Grandi G."/>
            <person name="Guiseppi G."/>
            <person name="Guy B.J."/>
            <person name="Haga K."/>
            <person name="Haiech J."/>
            <person name="Harwood C.R."/>
            <person name="Henaut A."/>
            <person name="Hilbert H."/>
            <person name="Holsappel S."/>
            <person name="Hosono S."/>
            <person name="Hullo M.-F."/>
            <person name="Itaya M."/>
            <person name="Jones L.-M."/>
            <person name="Joris B."/>
            <person name="Karamata D."/>
            <person name="Kasahara Y."/>
            <person name="Klaerr-Blanchard M."/>
            <person name="Klein C."/>
            <person name="Kobayashi Y."/>
            <person name="Koetter P."/>
            <person name="Koningstein G."/>
            <person name="Krogh S."/>
            <person name="Kumano M."/>
            <person name="Kurita K."/>
            <person name="Lapidus A."/>
            <person name="Lardinois S."/>
            <person name="Lauber J."/>
            <person name="Lazarevic V."/>
            <person name="Lee S.-M."/>
            <person name="Levine A."/>
            <person name="Liu H."/>
            <person name="Masuda S."/>
            <person name="Mauel C."/>
            <person name="Medigue C."/>
            <person name="Medina N."/>
            <person name="Mellado R.P."/>
            <person name="Mizuno M."/>
            <person name="Moestl D."/>
            <person name="Nakai S."/>
            <person name="Noback M."/>
            <person name="Noone D."/>
            <person name="O'Reilly M."/>
            <person name="Ogawa K."/>
            <person name="Ogiwara A."/>
            <person name="Oudega B."/>
            <person name="Park S.-H."/>
            <person name="Parro V."/>
            <person name="Pohl T.M."/>
            <person name="Portetelle D."/>
            <person name="Porwollik S."/>
            <person name="Prescott A.M."/>
            <person name="Presecan E."/>
            <person name="Pujic P."/>
            <person name="Purnelle B."/>
            <person name="Rapoport G."/>
            <person name="Rey M."/>
            <person name="Reynolds S."/>
            <person name="Rieger M."/>
            <person name="Rivolta C."/>
            <person name="Rocha E."/>
            <person name="Roche B."/>
            <person name="Rose M."/>
            <person name="Sadaie Y."/>
            <person name="Sato T."/>
            <person name="Scanlan E."/>
            <person name="Schleich S."/>
            <person name="Schroeter R."/>
            <person name="Scoffone F."/>
            <person name="Sekiguchi J."/>
            <person name="Sekowska A."/>
            <person name="Seror S.J."/>
            <person name="Serror P."/>
            <person name="Shin B.-S."/>
            <person name="Soldo B."/>
            <person name="Sorokin A."/>
            <person name="Tacconi E."/>
            <person name="Takagi T."/>
            <person name="Takahashi H."/>
            <person name="Takemaru K."/>
            <person name="Takeuchi M."/>
            <person name="Tamakoshi A."/>
            <person name="Tanaka T."/>
            <person name="Terpstra P."/>
            <person name="Tognoni A."/>
            <person name="Tosato V."/>
            <person name="Uchiyama S."/>
            <person name="Vandenbol M."/>
            <person name="Vannier F."/>
            <person name="Vassarotti A."/>
            <person name="Viari A."/>
            <person name="Wambutt R."/>
            <person name="Wedler E."/>
            <person name="Wedler H."/>
            <person name="Weitzenegger T."/>
            <person name="Winters P."/>
            <person name="Wipat A."/>
            <person name="Yamamoto H."/>
            <person name="Yamane K."/>
            <person name="Yasumoto K."/>
            <person name="Yata K."/>
            <person name="Yoshida K."/>
            <person name="Yoshikawa H.-F."/>
            <person name="Zumstein E."/>
            <person name="Yoshikawa H."/>
            <person name="Danchin A."/>
        </authorList>
    </citation>
    <scope>NUCLEOTIDE SEQUENCE [LARGE SCALE GENOMIC DNA]</scope>
    <source>
        <strain>168</strain>
    </source>
</reference>
<reference key="4">
    <citation type="journal article" date="1990" name="Nucleic Acids Res.">
        <title>Sequence of the Bacillus subtilis spectinomycin resistance gene region.</title>
        <authorList>
            <person name="Yoshikawa H."/>
            <person name="Doi R.H."/>
        </authorList>
    </citation>
    <scope>NUCLEOTIDE SEQUENCE [GENOMIC DNA] OF 1-116</scope>
</reference>
<reference key="5">
    <citation type="journal article" date="1990" name="Mol. Microbiol.">
        <title>Isolation of a secY homologue from Bacillus subtilis: evidence for a common protein export pathway in eubacteria.</title>
        <authorList>
            <person name="Suh J.-W."/>
            <person name="Boylan S.A."/>
            <person name="Thomas S.M."/>
            <person name="Dolan K.M."/>
            <person name="Oliver D.B."/>
            <person name="Price C.W."/>
        </authorList>
    </citation>
    <scope>NUCLEOTIDE SEQUENCE [GENOMIC DNA] OF 1-99</scope>
    <source>
        <strain>168</strain>
    </source>
</reference>
<reference key="6">
    <citation type="journal article" date="1997" name="Electrophoresis">
        <title>First steps from a two-dimensional protein index towards a response-regulation map for Bacillus subtilis.</title>
        <authorList>
            <person name="Antelmann H."/>
            <person name="Bernhardt J."/>
            <person name="Schmid R."/>
            <person name="Mach H."/>
            <person name="Voelker U."/>
            <person name="Hecker M."/>
        </authorList>
    </citation>
    <scope>PROTEIN SEQUENCE OF 1-20</scope>
    <source>
        <strain>168 / IS58</strain>
    </source>
</reference>
<reference key="7">
    <citation type="journal article" date="1992" name="Biochemistry">
        <title>Zinc, a novel structural element found in the family of bacterial adenylate kinases.</title>
        <authorList>
            <person name="Glaser P."/>
            <person name="Presecan E."/>
            <person name="Delepierre M."/>
            <person name="Surewicz W.K."/>
            <person name="Mantsch H.H."/>
            <person name="Barzu O."/>
            <person name="Gilles A.M."/>
        </authorList>
    </citation>
    <scope>ZINC ION</scope>
</reference>
<reference key="8">
    <citation type="journal article" date="2004" name="J. Biol. Chem.">
        <title>Structures and analysis of highly homologous psychrophilic, mesophilic, and thermophilic adenylate kinases.</title>
        <authorList>
            <person name="Bae E."/>
            <person name="Phillips G.N. Jr."/>
        </authorList>
    </citation>
    <scope>X-RAY CRYSTALLOGRAPHY (1.9 ANGSTROMS) OF COMPLEX WITH BI-SUBSTRATE ANALOG AP5A AND ZINC</scope>
    <scope>TEMPERATURE DEPENDENCE</scope>
</reference>
<reference key="9">
    <citation type="journal article" date="2006" name="Mol. Cell">
        <title>In vivo molecular evolution reveals biophysical origins of organismal fitness.</title>
        <authorList>
            <person name="Counago R."/>
            <person name="Chen S."/>
            <person name="Shamoo Y."/>
        </authorList>
    </citation>
    <scope>X-RAY CRYSTALLOGRAPHY (1.80 ANGSTROMS) OF 1-216 IN COMPLEX WITH BI-SUBSTRATE ANALOG AP5A AND ZINC</scope>
</reference>
<proteinExistence type="evidence at protein level"/>
<gene>
    <name evidence="1" type="primary">adk</name>
    <name type="ordered locus">BSU01370</name>
</gene>
<comment type="function">
    <text evidence="1">Catalyzes the reversible transfer of the terminal phosphate group between ATP and AMP. Plays an important role in cellular energy homeostasis and in adenine nucleotide metabolism.</text>
</comment>
<comment type="catalytic activity">
    <reaction evidence="1">
        <text>AMP + ATP = 2 ADP</text>
        <dbReference type="Rhea" id="RHEA:12973"/>
        <dbReference type="ChEBI" id="CHEBI:30616"/>
        <dbReference type="ChEBI" id="CHEBI:456215"/>
        <dbReference type="ChEBI" id="CHEBI:456216"/>
        <dbReference type="EC" id="2.7.4.3"/>
    </reaction>
</comment>
<comment type="biophysicochemical properties">
    <temperatureDependence>
        <text evidence="2">Optimum temperature is 45 degrees Celsius. Thermal denaturation midpoint (Tm) is 47.6 degrees Celsius and is raised to 66.0 degrees Celsius when AK is complexed with the inhibitor Ap5A.</text>
    </temperatureDependence>
</comment>
<comment type="pathway">
    <text evidence="1">Purine metabolism; AMP biosynthesis via salvage pathway; AMP from ADP: step 1/1.</text>
</comment>
<comment type="subunit">
    <text evidence="1 3">Monomer.</text>
</comment>
<comment type="subcellular location">
    <subcellularLocation>
        <location>Cytoplasm</location>
    </subcellularLocation>
</comment>
<comment type="induction">
    <text>By superoxide.</text>
</comment>
<comment type="domain">
    <text evidence="1 4 5 6">Consists of three domains, a large central CORE domain and two small peripheral domains, NMPbind and LID, which undergo movements during catalysis. The LID domain closes over the site of phosphoryl transfer upon ATP binding. Assembling and dissambling the active center during each catalytic cycle provides an effective means to prevent ATP hydrolysis. Some bacteria have evolved a zinc-coordinating structure that stabilizes the LID domain.</text>
</comment>
<comment type="similarity">
    <text evidence="1">Belongs to the adenylate kinase family.</text>
</comment>
<protein>
    <recommendedName>
        <fullName evidence="1">Adenylate kinase</fullName>
        <shortName evidence="1">AK</shortName>
        <ecNumber evidence="1">2.7.4.3</ecNumber>
    </recommendedName>
    <alternativeName>
        <fullName evidence="1">ATP-AMP transphosphorylase</fullName>
    </alternativeName>
    <alternativeName>
        <fullName evidence="1">ATP:AMP phosphotransferase</fullName>
    </alternativeName>
    <alternativeName>
        <fullName evidence="1">Adenylate monophosphate kinase</fullName>
    </alternativeName>
    <alternativeName>
        <fullName>Superoxide-inducible protein 16</fullName>
        <shortName>SOI16</shortName>
    </alternativeName>
</protein>
<organism>
    <name type="scientific">Bacillus subtilis (strain 168)</name>
    <dbReference type="NCBI Taxonomy" id="224308"/>
    <lineage>
        <taxon>Bacteria</taxon>
        <taxon>Bacillati</taxon>
        <taxon>Bacillota</taxon>
        <taxon>Bacilli</taxon>
        <taxon>Bacillales</taxon>
        <taxon>Bacillaceae</taxon>
        <taxon>Bacillus</taxon>
    </lineage>
</organism>
<name>KAD_BACSU</name>
<dbReference type="EC" id="2.7.4.3" evidence="1"/>
<dbReference type="EMBL" id="D00619">
    <property type="protein sequence ID" value="BAA00496.1"/>
    <property type="molecule type" value="Genomic_DNA"/>
</dbReference>
<dbReference type="EMBL" id="L47971">
    <property type="protein sequence ID" value="AAB06820.1"/>
    <property type="molecule type" value="Genomic_DNA"/>
</dbReference>
<dbReference type="EMBL" id="AL009126">
    <property type="protein sequence ID" value="CAB11913.1"/>
    <property type="molecule type" value="Genomic_DNA"/>
</dbReference>
<dbReference type="EMBL" id="M31102">
    <property type="protein sequence ID" value="AAB59119.1"/>
    <property type="molecule type" value="Genomic_DNA"/>
</dbReference>
<dbReference type="EMBL" id="X51329">
    <property type="protein sequence ID" value="CAA35713.1"/>
    <property type="molecule type" value="Genomic_DNA"/>
</dbReference>
<dbReference type="PIR" id="JS0492">
    <property type="entry name" value="JS0492"/>
</dbReference>
<dbReference type="RefSeq" id="NP_388018.1">
    <property type="nucleotide sequence ID" value="NC_000964.3"/>
</dbReference>
<dbReference type="RefSeq" id="WP_004399686.1">
    <property type="nucleotide sequence ID" value="NZ_OZ025638.1"/>
</dbReference>
<dbReference type="PDB" id="1P3J">
    <property type="method" value="X-ray"/>
    <property type="resolution" value="1.90 A"/>
    <property type="chains" value="A=1-217"/>
</dbReference>
<dbReference type="PDB" id="2EU8">
    <property type="method" value="X-ray"/>
    <property type="resolution" value="1.80 A"/>
    <property type="chains" value="A/B=1-216"/>
</dbReference>
<dbReference type="PDB" id="2OO7">
    <property type="method" value="X-ray"/>
    <property type="resolution" value="1.80 A"/>
    <property type="chains" value="A/B=1-217"/>
</dbReference>
<dbReference type="PDB" id="2ORI">
    <property type="method" value="X-ray"/>
    <property type="resolution" value="1.80 A"/>
    <property type="chains" value="A/B=1-216"/>
</dbReference>
<dbReference type="PDB" id="2OSB">
    <property type="method" value="X-ray"/>
    <property type="resolution" value="1.80 A"/>
    <property type="chains" value="A/B=1-216"/>
</dbReference>
<dbReference type="PDB" id="2P3S">
    <property type="method" value="X-ray"/>
    <property type="resolution" value="1.80 A"/>
    <property type="chains" value="A=1-217"/>
</dbReference>
<dbReference type="PDB" id="2QAJ">
    <property type="method" value="X-ray"/>
    <property type="resolution" value="1.80 A"/>
    <property type="chains" value="A/B=1-217"/>
</dbReference>
<dbReference type="PDB" id="3DKV">
    <property type="method" value="X-ray"/>
    <property type="resolution" value="1.82 A"/>
    <property type="chains" value="A=1-217"/>
</dbReference>
<dbReference type="PDB" id="3DL0">
    <property type="method" value="X-ray"/>
    <property type="resolution" value="1.58 A"/>
    <property type="chains" value="A/B=1-216"/>
</dbReference>
<dbReference type="PDB" id="4MKF">
    <property type="method" value="X-ray"/>
    <property type="resolution" value="1.70 A"/>
    <property type="chains" value="A/B=1-217"/>
</dbReference>
<dbReference type="PDB" id="4MKG">
    <property type="method" value="X-ray"/>
    <property type="resolution" value="1.45 A"/>
    <property type="chains" value="A=1-217"/>
</dbReference>
<dbReference type="PDB" id="4MKH">
    <property type="method" value="X-ray"/>
    <property type="resolution" value="1.50 A"/>
    <property type="chains" value="A=1-212"/>
</dbReference>
<dbReference type="PDB" id="4QBF">
    <property type="method" value="X-ray"/>
    <property type="resolution" value="1.80 A"/>
    <property type="chains" value="A=1-217"/>
</dbReference>
<dbReference type="PDB" id="4QBG">
    <property type="method" value="X-ray"/>
    <property type="resolution" value="1.37 A"/>
    <property type="chains" value="B=1-217"/>
</dbReference>
<dbReference type="PDB" id="4TYP">
    <property type="method" value="X-ray"/>
    <property type="resolution" value="2.90 A"/>
    <property type="chains" value="A/B/C/D=1-217"/>
</dbReference>
<dbReference type="PDB" id="4TYQ">
    <property type="method" value="X-ray"/>
    <property type="resolution" value="1.65 A"/>
    <property type="chains" value="A/B=1-217"/>
</dbReference>
<dbReference type="PDB" id="5X6I">
    <property type="method" value="X-ray"/>
    <property type="resolution" value="2.00 A"/>
    <property type="chains" value="A=1-217"/>
</dbReference>
<dbReference type="PDBsum" id="1P3J"/>
<dbReference type="PDBsum" id="2EU8"/>
<dbReference type="PDBsum" id="2OO7"/>
<dbReference type="PDBsum" id="2ORI"/>
<dbReference type="PDBsum" id="2OSB"/>
<dbReference type="PDBsum" id="2P3S"/>
<dbReference type="PDBsum" id="2QAJ"/>
<dbReference type="PDBsum" id="3DKV"/>
<dbReference type="PDBsum" id="3DL0"/>
<dbReference type="PDBsum" id="4MKF"/>
<dbReference type="PDBsum" id="4MKG"/>
<dbReference type="PDBsum" id="4MKH"/>
<dbReference type="PDBsum" id="4QBF"/>
<dbReference type="PDBsum" id="4QBG"/>
<dbReference type="PDBsum" id="4TYP"/>
<dbReference type="PDBsum" id="4TYQ"/>
<dbReference type="PDBsum" id="5X6I"/>
<dbReference type="SMR" id="P16304"/>
<dbReference type="FunCoup" id="P16304">
    <property type="interactions" value="762"/>
</dbReference>
<dbReference type="IntAct" id="P16304">
    <property type="interactions" value="1"/>
</dbReference>
<dbReference type="MINT" id="P16304"/>
<dbReference type="STRING" id="224308.BSU01370"/>
<dbReference type="DrugBank" id="DB01717">
    <property type="generic name" value="Bis(Adenosine)-5'-Pentaphosphate"/>
</dbReference>
<dbReference type="jPOST" id="P16304"/>
<dbReference type="PaxDb" id="224308-BSU01370"/>
<dbReference type="EnsemblBacteria" id="CAB11913">
    <property type="protein sequence ID" value="CAB11913"/>
    <property type="gene ID" value="BSU_01370"/>
</dbReference>
<dbReference type="GeneID" id="938508"/>
<dbReference type="KEGG" id="bsu:BSU01370"/>
<dbReference type="PATRIC" id="fig|224308.179.peg.140"/>
<dbReference type="eggNOG" id="COG0563">
    <property type="taxonomic scope" value="Bacteria"/>
</dbReference>
<dbReference type="InParanoid" id="P16304"/>
<dbReference type="OrthoDB" id="9805030at2"/>
<dbReference type="PhylomeDB" id="P16304"/>
<dbReference type="BioCyc" id="BSUB:BSU01370-MONOMER"/>
<dbReference type="BRENDA" id="2.7.4.3">
    <property type="organism ID" value="658"/>
</dbReference>
<dbReference type="SABIO-RK" id="P16304"/>
<dbReference type="UniPathway" id="UPA00588">
    <property type="reaction ID" value="UER00649"/>
</dbReference>
<dbReference type="EvolutionaryTrace" id="P16304"/>
<dbReference type="Proteomes" id="UP000001570">
    <property type="component" value="Chromosome"/>
</dbReference>
<dbReference type="GO" id="GO:0005737">
    <property type="term" value="C:cytoplasm"/>
    <property type="evidence" value="ECO:0000318"/>
    <property type="project" value="GO_Central"/>
</dbReference>
<dbReference type="GO" id="GO:0005829">
    <property type="term" value="C:cytosol"/>
    <property type="evidence" value="ECO:0000318"/>
    <property type="project" value="GO_Central"/>
</dbReference>
<dbReference type="GO" id="GO:0004017">
    <property type="term" value="F:adenylate kinase activity"/>
    <property type="evidence" value="ECO:0000318"/>
    <property type="project" value="GO_Central"/>
</dbReference>
<dbReference type="GO" id="GO:0005524">
    <property type="term" value="F:ATP binding"/>
    <property type="evidence" value="ECO:0007669"/>
    <property type="project" value="UniProtKB-UniRule"/>
</dbReference>
<dbReference type="GO" id="GO:0004550">
    <property type="term" value="F:nucleoside diphosphate kinase activity"/>
    <property type="evidence" value="ECO:0000318"/>
    <property type="project" value="GO_Central"/>
</dbReference>
<dbReference type="GO" id="GO:0008270">
    <property type="term" value="F:zinc ion binding"/>
    <property type="evidence" value="ECO:0007669"/>
    <property type="project" value="UniProtKB-UniRule"/>
</dbReference>
<dbReference type="GO" id="GO:0044209">
    <property type="term" value="P:AMP salvage"/>
    <property type="evidence" value="ECO:0007669"/>
    <property type="project" value="UniProtKB-UniRule"/>
</dbReference>
<dbReference type="GO" id="GO:0009132">
    <property type="term" value="P:nucleoside diphosphate metabolic process"/>
    <property type="evidence" value="ECO:0000318"/>
    <property type="project" value="GO_Central"/>
</dbReference>
<dbReference type="GO" id="GO:0009123">
    <property type="term" value="P:nucleoside monophosphate metabolic process"/>
    <property type="evidence" value="ECO:0000318"/>
    <property type="project" value="GO_Central"/>
</dbReference>
<dbReference type="CDD" id="cd01428">
    <property type="entry name" value="ADK"/>
    <property type="match status" value="1"/>
</dbReference>
<dbReference type="FunFam" id="3.40.50.300:FF:000106">
    <property type="entry name" value="Adenylate kinase mitochondrial"/>
    <property type="match status" value="1"/>
</dbReference>
<dbReference type="Gene3D" id="3.40.50.300">
    <property type="entry name" value="P-loop containing nucleotide triphosphate hydrolases"/>
    <property type="match status" value="1"/>
</dbReference>
<dbReference type="HAMAP" id="MF_00235">
    <property type="entry name" value="Adenylate_kinase_Adk"/>
    <property type="match status" value="1"/>
</dbReference>
<dbReference type="InterPro" id="IPR006259">
    <property type="entry name" value="Adenyl_kin_sub"/>
</dbReference>
<dbReference type="InterPro" id="IPR000850">
    <property type="entry name" value="Adenylat/UMP-CMP_kin"/>
</dbReference>
<dbReference type="InterPro" id="IPR033690">
    <property type="entry name" value="Adenylat_kinase_CS"/>
</dbReference>
<dbReference type="InterPro" id="IPR007862">
    <property type="entry name" value="Adenylate_kinase_lid-dom"/>
</dbReference>
<dbReference type="InterPro" id="IPR027417">
    <property type="entry name" value="P-loop_NTPase"/>
</dbReference>
<dbReference type="NCBIfam" id="TIGR01351">
    <property type="entry name" value="adk"/>
    <property type="match status" value="1"/>
</dbReference>
<dbReference type="NCBIfam" id="NF001380">
    <property type="entry name" value="PRK00279.1-2"/>
    <property type="match status" value="1"/>
</dbReference>
<dbReference type="NCBIfam" id="NF001381">
    <property type="entry name" value="PRK00279.1-3"/>
    <property type="match status" value="1"/>
</dbReference>
<dbReference type="NCBIfam" id="NF011100">
    <property type="entry name" value="PRK14527.1"/>
    <property type="match status" value="1"/>
</dbReference>
<dbReference type="PANTHER" id="PTHR23359">
    <property type="entry name" value="NUCLEOTIDE KINASE"/>
    <property type="match status" value="1"/>
</dbReference>
<dbReference type="Pfam" id="PF00406">
    <property type="entry name" value="ADK"/>
    <property type="match status" value="1"/>
</dbReference>
<dbReference type="Pfam" id="PF05191">
    <property type="entry name" value="ADK_lid"/>
    <property type="match status" value="1"/>
</dbReference>
<dbReference type="PRINTS" id="PR00094">
    <property type="entry name" value="ADENYLTKNASE"/>
</dbReference>
<dbReference type="SUPFAM" id="SSF52540">
    <property type="entry name" value="P-loop containing nucleoside triphosphate hydrolases"/>
    <property type="match status" value="1"/>
</dbReference>
<dbReference type="PROSITE" id="PS00113">
    <property type="entry name" value="ADENYLATE_KINASE"/>
    <property type="match status" value="1"/>
</dbReference>
<evidence type="ECO:0000255" key="1">
    <source>
        <dbReference type="HAMAP-Rule" id="MF_00235"/>
    </source>
</evidence>
<evidence type="ECO:0000269" key="2">
    <source>
    </source>
</evidence>
<evidence type="ECO:0000269" key="3">
    <source>
    </source>
</evidence>
<evidence type="ECO:0000305" key="4">
    <source>
    </source>
</evidence>
<evidence type="ECO:0000305" key="5">
    <source>
    </source>
</evidence>
<evidence type="ECO:0000305" key="6">
    <source>
    </source>
</evidence>
<evidence type="ECO:0007829" key="7">
    <source>
        <dbReference type="PDB" id="3DL0"/>
    </source>
</evidence>
<evidence type="ECO:0007829" key="8">
    <source>
        <dbReference type="PDB" id="4MKG"/>
    </source>
</evidence>
<evidence type="ECO:0007829" key="9">
    <source>
        <dbReference type="PDB" id="4QBG"/>
    </source>
</evidence>
<accession>P16304</accession>